<feature type="chain" id="PRO_0000415231" description="Endo-1,4-beta-xylanase A">
    <location>
        <begin position="1"/>
        <end position="327"/>
    </location>
</feature>
<feature type="domain" description="GH10" evidence="2">
    <location>
        <begin position="1"/>
        <end position="323"/>
    </location>
</feature>
<feature type="active site" description="Proton donor" evidence="4">
    <location>
        <position position="131"/>
    </location>
</feature>
<feature type="active site" description="Nucleophile" evidence="3 4">
    <location>
        <position position="245"/>
    </location>
</feature>
<feature type="glycosylation site" description="N-linked (GlcNAc...) asparagine" evidence="4">
    <location>
        <position position="101"/>
    </location>
</feature>
<feature type="disulfide bond" evidence="4">
    <location>
        <begin position="81"/>
        <end position="123"/>
    </location>
</feature>
<feature type="disulfide bond" evidence="4">
    <location>
        <begin position="273"/>
        <end position="279"/>
    </location>
</feature>
<feature type="helix" evidence="7">
    <location>
        <begin position="5"/>
        <end position="11"/>
    </location>
</feature>
<feature type="strand" evidence="7">
    <location>
        <begin position="16"/>
        <end position="21"/>
    </location>
</feature>
<feature type="helix" evidence="7">
    <location>
        <begin position="28"/>
        <end position="33"/>
    </location>
</feature>
<feature type="turn" evidence="7">
    <location>
        <begin position="36"/>
        <end position="38"/>
    </location>
</feature>
<feature type="strand" evidence="7">
    <location>
        <begin position="41"/>
        <end position="46"/>
    </location>
</feature>
<feature type="helix" evidence="7">
    <location>
        <begin position="50"/>
        <end position="53"/>
    </location>
</feature>
<feature type="helix" evidence="7">
    <location>
        <begin position="63"/>
        <end position="73"/>
    </location>
</feature>
<feature type="turn" evidence="7">
    <location>
        <begin position="74"/>
        <end position="76"/>
    </location>
</feature>
<feature type="strand" evidence="7">
    <location>
        <begin position="78"/>
        <end position="87"/>
    </location>
</feature>
<feature type="helix" evidence="7">
    <location>
        <begin position="92"/>
        <end position="95"/>
    </location>
</feature>
<feature type="helix" evidence="7">
    <location>
        <begin position="101"/>
        <end position="118"/>
    </location>
</feature>
<feature type="turn" evidence="7">
    <location>
        <begin position="119"/>
        <end position="122"/>
    </location>
</feature>
<feature type="strand" evidence="7">
    <location>
        <begin position="124"/>
        <end position="130"/>
    </location>
</feature>
<feature type="strand" evidence="7">
    <location>
        <begin position="137"/>
        <end position="139"/>
    </location>
</feature>
<feature type="helix" evidence="7">
    <location>
        <begin position="143"/>
        <end position="148"/>
    </location>
</feature>
<feature type="helix" evidence="7">
    <location>
        <begin position="152"/>
        <end position="163"/>
    </location>
</feature>
<feature type="strand" evidence="7">
    <location>
        <begin position="167"/>
        <end position="175"/>
    </location>
</feature>
<feature type="helix" evidence="7">
    <location>
        <begin position="181"/>
        <end position="195"/>
    </location>
</feature>
<feature type="strand" evidence="7">
    <location>
        <begin position="202"/>
        <end position="205"/>
    </location>
</feature>
<feature type="strand" evidence="7">
    <location>
        <begin position="208"/>
        <end position="212"/>
    </location>
</feature>
<feature type="helix" evidence="7">
    <location>
        <begin position="224"/>
        <end position="235"/>
    </location>
</feature>
<feature type="turn" evidence="7">
    <location>
        <begin position="236"/>
        <end position="238"/>
    </location>
</feature>
<feature type="strand" evidence="7">
    <location>
        <begin position="240"/>
        <end position="253"/>
    </location>
</feature>
<feature type="helix" evidence="7">
    <location>
        <begin position="256"/>
        <end position="275"/>
    </location>
</feature>
<feature type="strand" evidence="7">
    <location>
        <begin position="279"/>
        <end position="285"/>
    </location>
</feature>
<feature type="helix" evidence="7">
    <location>
        <begin position="289"/>
        <end position="291"/>
    </location>
</feature>
<feature type="helix" evidence="7">
    <location>
        <begin position="294"/>
        <end position="297"/>
    </location>
</feature>
<feature type="strand" evidence="7">
    <location>
        <begin position="305"/>
        <end position="307"/>
    </location>
</feature>
<feature type="helix" evidence="7">
    <location>
        <begin position="315"/>
        <end position="325"/>
    </location>
</feature>
<proteinExistence type="evidence at protein level"/>
<protein>
    <recommendedName>
        <fullName>Endo-1,4-beta-xylanase A</fullName>
        <shortName>Xylanase A</shortName>
        <ecNumber>3.2.1.8</ecNumber>
    </recommendedName>
    <alternativeName>
        <fullName>1,4-beta-D-xylan xylanohydrolase A</fullName>
    </alternativeName>
    <alternativeName>
        <fullName>Endo-1,4-beta-xylanase GH10 A</fullName>
        <shortName>FoXyn10a</shortName>
    </alternativeName>
    <alternativeName>
        <fullName>Xylanase III</fullName>
    </alternativeName>
</protein>
<name>XYNA_FUSO4</name>
<organism>
    <name type="scientific">Fusarium oxysporum f. sp. lycopersici (strain 4287 / CBS 123668 / FGSC 9935 / NRRL 34936)</name>
    <name type="common">Fusarium vascular wilt of tomato</name>
    <dbReference type="NCBI Taxonomy" id="426428"/>
    <lineage>
        <taxon>Eukaryota</taxon>
        <taxon>Fungi</taxon>
        <taxon>Dikarya</taxon>
        <taxon>Ascomycota</taxon>
        <taxon>Pezizomycotina</taxon>
        <taxon>Sordariomycetes</taxon>
        <taxon>Hypocreomycetidae</taxon>
        <taxon>Hypocreales</taxon>
        <taxon>Nectriaceae</taxon>
        <taxon>Fusarium</taxon>
        <taxon>Fusarium oxysporum species complex</taxon>
    </lineage>
</organism>
<keyword id="KW-0002">3D-structure</keyword>
<keyword id="KW-0119">Carbohydrate metabolism</keyword>
<keyword id="KW-0903">Direct protein sequencing</keyword>
<keyword id="KW-1015">Disulfide bond</keyword>
<keyword id="KW-0325">Glycoprotein</keyword>
<keyword id="KW-0378">Hydrolase</keyword>
<keyword id="KW-0624">Polysaccharide degradation</keyword>
<keyword id="KW-0964">Secreted</keyword>
<keyword id="KW-0858">Xylan degradation</keyword>
<comment type="function">
    <text evidence="5">Catalyzes the hydrolysis of the internal glycosidic bonds in heteroxylans, releasing mainly xylobiose and xylotriose. Most active on oat-spelt xylan.</text>
</comment>
<comment type="catalytic activity">
    <reaction evidence="5">
        <text>Endohydrolysis of (1-&gt;4)-beta-D-xylosidic linkages in xylans.</text>
        <dbReference type="EC" id="3.2.1.8"/>
    </reaction>
</comment>
<comment type="biophysicochemical properties">
    <kinetics>
        <Vmax evidence="5">1.22 mmol/min/mg enzyme</Vmax>
    </kinetics>
    <phDependence>
        <text evidence="5">Optimum pH is 6-8.</text>
    </phDependence>
    <temperatureDependence>
        <text evidence="5">Optimum temperature is 40-50 degrees Celsius.</text>
    </temperatureDependence>
</comment>
<comment type="pathway">
    <text>Glycan degradation; xylan degradation.</text>
</comment>
<comment type="subunit">
    <text evidence="5">Monomer.</text>
</comment>
<comment type="subcellular location">
    <subcellularLocation>
        <location evidence="5">Secreted</location>
        <location evidence="5">Extracellular space</location>
    </subcellularLocation>
</comment>
<comment type="similarity">
    <text evidence="1">Belongs to the glycosyl hydrolase 10 (cellulase F) family.</text>
</comment>
<gene>
    <name type="ORF">FOXG_17421</name>
</gene>
<dbReference type="EC" id="3.2.1.8"/>
<dbReference type="EMBL" id="AAXH01001232">
    <property type="status" value="NOT_ANNOTATED_CDS"/>
    <property type="molecule type" value="Genomic_DNA"/>
</dbReference>
<dbReference type="PDB" id="3U7B">
    <property type="method" value="X-ray"/>
    <property type="resolution" value="1.94 A"/>
    <property type="chains" value="A/B/C/D/E=1-327"/>
</dbReference>
<dbReference type="PDBsum" id="3U7B"/>
<dbReference type="SMR" id="B3A0S5"/>
<dbReference type="STRING" id="426428.B3A0S5"/>
<dbReference type="iPTMnet" id="B3A0S5"/>
<dbReference type="UniPathway" id="UPA00114"/>
<dbReference type="EvolutionaryTrace" id="B3A0S5"/>
<dbReference type="GO" id="GO:0005576">
    <property type="term" value="C:extracellular region"/>
    <property type="evidence" value="ECO:0007669"/>
    <property type="project" value="UniProtKB-SubCell"/>
</dbReference>
<dbReference type="GO" id="GO:0031176">
    <property type="term" value="F:endo-1,4-beta-xylanase activity"/>
    <property type="evidence" value="ECO:0007669"/>
    <property type="project" value="UniProtKB-EC"/>
</dbReference>
<dbReference type="GO" id="GO:0045493">
    <property type="term" value="P:xylan catabolic process"/>
    <property type="evidence" value="ECO:0007669"/>
    <property type="project" value="UniProtKB-UniPathway"/>
</dbReference>
<dbReference type="Gene3D" id="3.20.20.80">
    <property type="entry name" value="Glycosidases"/>
    <property type="match status" value="1"/>
</dbReference>
<dbReference type="InterPro" id="IPR044846">
    <property type="entry name" value="GH10"/>
</dbReference>
<dbReference type="InterPro" id="IPR001000">
    <property type="entry name" value="GH10_dom"/>
</dbReference>
<dbReference type="InterPro" id="IPR017853">
    <property type="entry name" value="Glycoside_hydrolase_SF"/>
</dbReference>
<dbReference type="PANTHER" id="PTHR31490:SF35">
    <property type="entry name" value="ENDO-1,4-BETA-XYLANASE"/>
    <property type="match status" value="1"/>
</dbReference>
<dbReference type="PANTHER" id="PTHR31490">
    <property type="entry name" value="GLYCOSYL HYDROLASE"/>
    <property type="match status" value="1"/>
</dbReference>
<dbReference type="Pfam" id="PF00331">
    <property type="entry name" value="Glyco_hydro_10"/>
    <property type="match status" value="1"/>
</dbReference>
<dbReference type="PRINTS" id="PR00134">
    <property type="entry name" value="GLHYDRLASE10"/>
</dbReference>
<dbReference type="SMART" id="SM00633">
    <property type="entry name" value="Glyco_10"/>
    <property type="match status" value="1"/>
</dbReference>
<dbReference type="SUPFAM" id="SSF51445">
    <property type="entry name" value="(Trans)glycosidases"/>
    <property type="match status" value="1"/>
</dbReference>
<dbReference type="PROSITE" id="PS51760">
    <property type="entry name" value="GH10_2"/>
    <property type="match status" value="1"/>
</dbReference>
<evidence type="ECO:0000255" key="1"/>
<evidence type="ECO:0000255" key="2">
    <source>
        <dbReference type="PROSITE-ProRule" id="PRU01096"/>
    </source>
</evidence>
<evidence type="ECO:0000255" key="3">
    <source>
        <dbReference type="PROSITE-ProRule" id="PRU10061"/>
    </source>
</evidence>
<evidence type="ECO:0000269" key="4">
    <source>
    </source>
</evidence>
<evidence type="ECO:0000269" key="5">
    <source>
    </source>
</evidence>
<evidence type="ECO:0000305" key="6"/>
<evidence type="ECO:0007829" key="7">
    <source>
        <dbReference type="PDB" id="3U7B"/>
    </source>
</evidence>
<sequence length="327" mass="36198">AASGLEAAMKAAGKQYFGTALTVRNDQGEIDIINNKNEIGSITPENAMKWEAIQPNRGQFNWGPADQHAAAATSRGYELRCHTLVWHSQLPSWVANGNWNNQTLQAVMRDHINAVMGRYRGKCTHWDVVNEALNEDGTYRDSVFLRVIGEAYIPIAFRMALAADPTTKLYYNDYNLEYGNAKTEGAKRIARLVKSYGLRIDGIGLQAHMTSESTPTQNTPTPSRAKLASVLQGLADLGVDVAYTELDIRMNTPATQQKLQTNADAYARIVGSCMDVKRCVGITVWGISDKYSWVPGTFPGEGSALLWNDNFQKKPSYTSTLNTINRR</sequence>
<accession>B3A0S5</accession>
<accession>J9NQE2</accession>
<reference evidence="6" key="1">
    <citation type="journal article" date="2010" name="Nature">
        <title>Comparative genomics reveals mobile pathogenicity chromosomes in Fusarium.</title>
        <authorList>
            <person name="Ma L.-J."/>
            <person name="van der Does H.C."/>
            <person name="Borkovich K.A."/>
            <person name="Coleman J.J."/>
            <person name="Daboussi M.-J."/>
            <person name="Di Pietro A."/>
            <person name="Dufresne M."/>
            <person name="Freitag M."/>
            <person name="Grabherr M."/>
            <person name="Henrissat B."/>
            <person name="Houterman P.M."/>
            <person name="Kang S."/>
            <person name="Shim W.-B."/>
            <person name="Woloshuk C."/>
            <person name="Xie X."/>
            <person name="Xu J.-R."/>
            <person name="Antoniw J."/>
            <person name="Baker S.E."/>
            <person name="Bluhm B.H."/>
            <person name="Breakspear A."/>
            <person name="Brown D.W."/>
            <person name="Butchko R.A.E."/>
            <person name="Chapman S."/>
            <person name="Coulson R."/>
            <person name="Coutinho P.M."/>
            <person name="Danchin E.G.J."/>
            <person name="Diener A."/>
            <person name="Gale L.R."/>
            <person name="Gardiner D.M."/>
            <person name="Goff S."/>
            <person name="Hammond-Kosack K.E."/>
            <person name="Hilburn K."/>
            <person name="Hua-Van A."/>
            <person name="Jonkers W."/>
            <person name="Kazan K."/>
            <person name="Kodira C.D."/>
            <person name="Koehrsen M."/>
            <person name="Kumar L."/>
            <person name="Lee Y.-H."/>
            <person name="Li L."/>
            <person name="Manners J.M."/>
            <person name="Miranda-Saavedra D."/>
            <person name="Mukherjee M."/>
            <person name="Park G."/>
            <person name="Park J."/>
            <person name="Park S.-Y."/>
            <person name="Proctor R.H."/>
            <person name="Regev A."/>
            <person name="Ruiz-Roldan M.C."/>
            <person name="Sain D."/>
            <person name="Sakthikumar S."/>
            <person name="Sykes S."/>
            <person name="Schwartz D.C."/>
            <person name="Turgeon B.G."/>
            <person name="Wapinski I."/>
            <person name="Yoder O."/>
            <person name="Young S."/>
            <person name="Zeng Q."/>
            <person name="Zhou S."/>
            <person name="Galagan J."/>
            <person name="Cuomo C.A."/>
            <person name="Kistler H.C."/>
            <person name="Rep M."/>
        </authorList>
    </citation>
    <scope>NUCLEOTIDE SEQUENCE [LARGE SCALE GENOMIC DNA] OF 25-327</scope>
    <source>
        <strain>4287 / CBS 123668 / FGSC 9935 / NRRL 34936</strain>
    </source>
</reference>
<reference key="2">
    <citation type="journal article" date="1997" name="Carbohydr. Res.">
        <title>The alkaline xylanase III from Fusarium oxysporum F3 belongs to family F/10.</title>
        <authorList>
            <person name="Christakopoulos P."/>
            <person name="Nerinckx W."/>
            <person name="Kekos D."/>
            <person name="Macris B."/>
            <person name="Claeyssens M."/>
        </authorList>
    </citation>
    <scope>PROTEIN SEQUENCE OF 168-182 AND 290-313</scope>
    <scope>FUNCTION</scope>
    <scope>CATALYTIC ACTIVITY</scope>
    <scope>BIOPHYSICOCHEMICAL PROPERTIES</scope>
    <scope>SUBUNIT</scope>
    <scope>SUBCELLULAR LOCATION</scope>
    <source>
        <strain>F3</strain>
    </source>
</reference>
<reference key="3">
    <citation type="journal article" date="2012" name="Acta Crystallogr.">
        <title>The structure of a GH10 xylanase from Fusarium oxysporum reveals the presence of an extended loop on top of the catalytic cleft.</title>
        <authorList>
            <person name="Dimarogona M."/>
            <person name="Topakas E."/>
            <person name="Christakopoulos P."/>
            <person name="Chrysina E.D."/>
        </authorList>
    </citation>
    <scope>X-RAY CRYSTALLOGRAPHY (1.94 ANGSTROMS)</scope>
    <scope>PROTEIN SEQUENCE OF 1-24</scope>
    <scope>GLYCOSYLATION AT ASN-101</scope>
    <scope>ACTIVE SITES</scope>
    <scope>DISULFIDE BONDS</scope>
    <source>
        <strain>F3</strain>
    </source>
</reference>